<comment type="function">
    <text evidence="1">Methylates ribosomal protein L11.</text>
</comment>
<comment type="catalytic activity">
    <reaction evidence="1">
        <text>L-lysyl-[protein] + 3 S-adenosyl-L-methionine = N(6),N(6),N(6)-trimethyl-L-lysyl-[protein] + 3 S-adenosyl-L-homocysteine + 3 H(+)</text>
        <dbReference type="Rhea" id="RHEA:54192"/>
        <dbReference type="Rhea" id="RHEA-COMP:9752"/>
        <dbReference type="Rhea" id="RHEA-COMP:13826"/>
        <dbReference type="ChEBI" id="CHEBI:15378"/>
        <dbReference type="ChEBI" id="CHEBI:29969"/>
        <dbReference type="ChEBI" id="CHEBI:57856"/>
        <dbReference type="ChEBI" id="CHEBI:59789"/>
        <dbReference type="ChEBI" id="CHEBI:61961"/>
    </reaction>
</comment>
<comment type="subcellular location">
    <subcellularLocation>
        <location evidence="1">Cytoplasm</location>
    </subcellularLocation>
</comment>
<comment type="similarity">
    <text evidence="1">Belongs to the methyltransferase superfamily. PrmA family.</text>
</comment>
<accession>A0KNJ1</accession>
<feature type="chain" id="PRO_1000045980" description="Ribosomal protein L11 methyltransferase">
    <location>
        <begin position="1"/>
        <end position="292"/>
    </location>
</feature>
<feature type="binding site" evidence="1">
    <location>
        <position position="143"/>
    </location>
    <ligand>
        <name>S-adenosyl-L-methionine</name>
        <dbReference type="ChEBI" id="CHEBI:59789"/>
    </ligand>
</feature>
<feature type="binding site" evidence="1">
    <location>
        <position position="164"/>
    </location>
    <ligand>
        <name>S-adenosyl-L-methionine</name>
        <dbReference type="ChEBI" id="CHEBI:59789"/>
    </ligand>
</feature>
<feature type="binding site" evidence="1">
    <location>
        <position position="186"/>
    </location>
    <ligand>
        <name>S-adenosyl-L-methionine</name>
        <dbReference type="ChEBI" id="CHEBI:59789"/>
    </ligand>
</feature>
<feature type="binding site" evidence="1">
    <location>
        <position position="228"/>
    </location>
    <ligand>
        <name>S-adenosyl-L-methionine</name>
        <dbReference type="ChEBI" id="CHEBI:59789"/>
    </ligand>
</feature>
<proteinExistence type="inferred from homology"/>
<organism>
    <name type="scientific">Aeromonas hydrophila subsp. hydrophila (strain ATCC 7966 / DSM 30187 / BCRC 13018 / CCUG 14551 / JCM 1027 / KCTC 2358 / NCIMB 9240 / NCTC 8049)</name>
    <dbReference type="NCBI Taxonomy" id="380703"/>
    <lineage>
        <taxon>Bacteria</taxon>
        <taxon>Pseudomonadati</taxon>
        <taxon>Pseudomonadota</taxon>
        <taxon>Gammaproteobacteria</taxon>
        <taxon>Aeromonadales</taxon>
        <taxon>Aeromonadaceae</taxon>
        <taxon>Aeromonas</taxon>
    </lineage>
</organism>
<evidence type="ECO:0000255" key="1">
    <source>
        <dbReference type="HAMAP-Rule" id="MF_00735"/>
    </source>
</evidence>
<name>PRMA_AERHH</name>
<sequence>MPWIQIRINATAKTADKVSNMLLGRGAQAVTFMDAKDVPVYEPMPGETPLWGETEVMGLFDAETDPAPTIAFFQQIFGEDVGYKVEQLEDKDWVREWMDHFHPMQFGERLWICPSWRDVPNPDAVNVMLDPGLAFGTGTHPTTALCLQWLDGLDLAGKTVVDFGCGSGILGIAALKLGAARVIGIDIDPQAIQASRDNAERNGVADQIELYLPADQPQDVEADVVVANILAGPLRELAPLIAGHGKAGSLMALSGVLESQAPELETIYGQWFEMDPTAVKEEWCRLSGRKLG</sequence>
<keyword id="KW-0963">Cytoplasm</keyword>
<keyword id="KW-0489">Methyltransferase</keyword>
<keyword id="KW-1185">Reference proteome</keyword>
<keyword id="KW-0949">S-adenosyl-L-methionine</keyword>
<keyword id="KW-0808">Transferase</keyword>
<reference key="1">
    <citation type="journal article" date="2006" name="J. Bacteriol.">
        <title>Genome sequence of Aeromonas hydrophila ATCC 7966T: jack of all trades.</title>
        <authorList>
            <person name="Seshadri R."/>
            <person name="Joseph S.W."/>
            <person name="Chopra A.K."/>
            <person name="Sha J."/>
            <person name="Shaw J."/>
            <person name="Graf J."/>
            <person name="Haft D.H."/>
            <person name="Wu M."/>
            <person name="Ren Q."/>
            <person name="Rosovitz M.J."/>
            <person name="Madupu R."/>
            <person name="Tallon L."/>
            <person name="Kim M."/>
            <person name="Jin S."/>
            <person name="Vuong H."/>
            <person name="Stine O.C."/>
            <person name="Ali A."/>
            <person name="Horneman A.J."/>
            <person name="Heidelberg J.F."/>
        </authorList>
    </citation>
    <scope>NUCLEOTIDE SEQUENCE [LARGE SCALE GENOMIC DNA]</scope>
    <source>
        <strain>ATCC 7966 / DSM 30187 / BCRC 13018 / CCUG 14551 / JCM 1027 / KCTC 2358 / NCIMB 9240 / NCTC 8049</strain>
    </source>
</reference>
<dbReference type="EC" id="2.1.1.-" evidence="1"/>
<dbReference type="EMBL" id="CP000462">
    <property type="protein sequence ID" value="ABK38669.1"/>
    <property type="molecule type" value="Genomic_DNA"/>
</dbReference>
<dbReference type="RefSeq" id="WP_010675412.1">
    <property type="nucleotide sequence ID" value="NC_008570.1"/>
</dbReference>
<dbReference type="RefSeq" id="YP_857842.1">
    <property type="nucleotide sequence ID" value="NC_008570.1"/>
</dbReference>
<dbReference type="SMR" id="A0KNJ1"/>
<dbReference type="STRING" id="380703.AHA_3353"/>
<dbReference type="EnsemblBacteria" id="ABK38669">
    <property type="protein sequence ID" value="ABK38669"/>
    <property type="gene ID" value="AHA_3353"/>
</dbReference>
<dbReference type="GeneID" id="4489447"/>
<dbReference type="KEGG" id="aha:AHA_3353"/>
<dbReference type="PATRIC" id="fig|380703.7.peg.3350"/>
<dbReference type="eggNOG" id="COG2264">
    <property type="taxonomic scope" value="Bacteria"/>
</dbReference>
<dbReference type="HOGENOM" id="CLU_049382_4_1_6"/>
<dbReference type="OrthoDB" id="9785995at2"/>
<dbReference type="Proteomes" id="UP000000756">
    <property type="component" value="Chromosome"/>
</dbReference>
<dbReference type="GO" id="GO:0005829">
    <property type="term" value="C:cytosol"/>
    <property type="evidence" value="ECO:0007669"/>
    <property type="project" value="TreeGrafter"/>
</dbReference>
<dbReference type="GO" id="GO:0016279">
    <property type="term" value="F:protein-lysine N-methyltransferase activity"/>
    <property type="evidence" value="ECO:0007669"/>
    <property type="project" value="TreeGrafter"/>
</dbReference>
<dbReference type="GO" id="GO:0032259">
    <property type="term" value="P:methylation"/>
    <property type="evidence" value="ECO:0007669"/>
    <property type="project" value="UniProtKB-KW"/>
</dbReference>
<dbReference type="CDD" id="cd02440">
    <property type="entry name" value="AdoMet_MTases"/>
    <property type="match status" value="1"/>
</dbReference>
<dbReference type="Gene3D" id="3.40.50.150">
    <property type="entry name" value="Vaccinia Virus protein VP39"/>
    <property type="match status" value="1"/>
</dbReference>
<dbReference type="HAMAP" id="MF_00735">
    <property type="entry name" value="Methyltr_PrmA"/>
    <property type="match status" value="1"/>
</dbReference>
<dbReference type="InterPro" id="IPR050078">
    <property type="entry name" value="Ribosomal_L11_MeTrfase_PrmA"/>
</dbReference>
<dbReference type="InterPro" id="IPR004498">
    <property type="entry name" value="Ribosomal_PrmA_MeTrfase"/>
</dbReference>
<dbReference type="InterPro" id="IPR029063">
    <property type="entry name" value="SAM-dependent_MTases_sf"/>
</dbReference>
<dbReference type="NCBIfam" id="TIGR00406">
    <property type="entry name" value="prmA"/>
    <property type="match status" value="1"/>
</dbReference>
<dbReference type="PANTHER" id="PTHR43648">
    <property type="entry name" value="ELECTRON TRANSFER FLAVOPROTEIN BETA SUBUNIT LYSINE METHYLTRANSFERASE"/>
    <property type="match status" value="1"/>
</dbReference>
<dbReference type="PANTHER" id="PTHR43648:SF1">
    <property type="entry name" value="ELECTRON TRANSFER FLAVOPROTEIN BETA SUBUNIT LYSINE METHYLTRANSFERASE"/>
    <property type="match status" value="1"/>
</dbReference>
<dbReference type="Pfam" id="PF06325">
    <property type="entry name" value="PrmA"/>
    <property type="match status" value="1"/>
</dbReference>
<dbReference type="PIRSF" id="PIRSF000401">
    <property type="entry name" value="RPL11_MTase"/>
    <property type="match status" value="1"/>
</dbReference>
<dbReference type="SUPFAM" id="SSF53335">
    <property type="entry name" value="S-adenosyl-L-methionine-dependent methyltransferases"/>
    <property type="match status" value="1"/>
</dbReference>
<protein>
    <recommendedName>
        <fullName evidence="1">Ribosomal protein L11 methyltransferase</fullName>
        <shortName evidence="1">L11 Mtase</shortName>
        <ecNumber evidence="1">2.1.1.-</ecNumber>
    </recommendedName>
</protein>
<gene>
    <name evidence="1" type="primary">prmA</name>
    <name type="ordered locus">AHA_3353</name>
</gene>